<name>RL14_METLZ</name>
<reference key="1">
    <citation type="journal article" date="2009" name="Stand. Genomic Sci.">
        <title>Complete genome sequence of Methanocorpusculum labreanum type strain Z.</title>
        <authorList>
            <person name="Anderson I.J."/>
            <person name="Sieprawska-Lupa M."/>
            <person name="Goltsman E."/>
            <person name="Lapidus A."/>
            <person name="Copeland A."/>
            <person name="Glavina Del Rio T."/>
            <person name="Tice H."/>
            <person name="Dalin E."/>
            <person name="Barry K."/>
            <person name="Pitluck S."/>
            <person name="Hauser L."/>
            <person name="Land M."/>
            <person name="Lucas S."/>
            <person name="Richardson P."/>
            <person name="Whitman W.B."/>
            <person name="Kyrpides N.C."/>
        </authorList>
    </citation>
    <scope>NUCLEOTIDE SEQUENCE [LARGE SCALE GENOMIC DNA]</scope>
    <source>
        <strain>ATCC 43576 / DSM 4855 / Z</strain>
    </source>
</reference>
<organism>
    <name type="scientific">Methanocorpusculum labreanum (strain ATCC 43576 / DSM 4855 / Z)</name>
    <dbReference type="NCBI Taxonomy" id="410358"/>
    <lineage>
        <taxon>Archaea</taxon>
        <taxon>Methanobacteriati</taxon>
        <taxon>Methanobacteriota</taxon>
        <taxon>Stenosarchaea group</taxon>
        <taxon>Methanomicrobia</taxon>
        <taxon>Methanomicrobiales</taxon>
        <taxon>Methanocorpusculaceae</taxon>
        <taxon>Methanocorpusculum</taxon>
    </lineage>
</organism>
<sequence length="132" mass="14474">MKGLTSKIPRALQTGSKMVCADNTGARVVQIVSVFGYHGVKNRQPKMGLGDLATVTVKKGTPDMKRKLVRAVVVRQKKEFRRPNGLRVSFEENAMILLNENGDPRGTDIKGPVAREVAERFPKVGSMATIII</sequence>
<dbReference type="EMBL" id="CP000559">
    <property type="protein sequence ID" value="ABN06268.1"/>
    <property type="molecule type" value="Genomic_DNA"/>
</dbReference>
<dbReference type="RefSeq" id="WP_011832469.1">
    <property type="nucleotide sequence ID" value="NC_008942.1"/>
</dbReference>
<dbReference type="SMR" id="A2SPL2"/>
<dbReference type="STRING" id="410358.Mlab_0091"/>
<dbReference type="GeneID" id="4795040"/>
<dbReference type="KEGG" id="mla:Mlab_0091"/>
<dbReference type="eggNOG" id="arCOG04095">
    <property type="taxonomic scope" value="Archaea"/>
</dbReference>
<dbReference type="HOGENOM" id="CLU_095071_3_0_2"/>
<dbReference type="OrthoDB" id="23569at2157"/>
<dbReference type="Proteomes" id="UP000000365">
    <property type="component" value="Chromosome"/>
</dbReference>
<dbReference type="GO" id="GO:0022625">
    <property type="term" value="C:cytosolic large ribosomal subunit"/>
    <property type="evidence" value="ECO:0007669"/>
    <property type="project" value="TreeGrafter"/>
</dbReference>
<dbReference type="GO" id="GO:0070180">
    <property type="term" value="F:large ribosomal subunit rRNA binding"/>
    <property type="evidence" value="ECO:0007669"/>
    <property type="project" value="TreeGrafter"/>
</dbReference>
<dbReference type="GO" id="GO:0003735">
    <property type="term" value="F:structural constituent of ribosome"/>
    <property type="evidence" value="ECO:0007669"/>
    <property type="project" value="InterPro"/>
</dbReference>
<dbReference type="GO" id="GO:0006412">
    <property type="term" value="P:translation"/>
    <property type="evidence" value="ECO:0007669"/>
    <property type="project" value="UniProtKB-UniRule"/>
</dbReference>
<dbReference type="CDD" id="cd00337">
    <property type="entry name" value="Ribosomal_uL14"/>
    <property type="match status" value="1"/>
</dbReference>
<dbReference type="FunFam" id="2.40.150.20:FF:000007">
    <property type="entry name" value="50S ribosomal protein L14"/>
    <property type="match status" value="1"/>
</dbReference>
<dbReference type="Gene3D" id="2.40.150.20">
    <property type="entry name" value="Ribosomal protein L14"/>
    <property type="match status" value="1"/>
</dbReference>
<dbReference type="HAMAP" id="MF_01367">
    <property type="entry name" value="Ribosomal_uL14"/>
    <property type="match status" value="1"/>
</dbReference>
<dbReference type="InterPro" id="IPR000218">
    <property type="entry name" value="Ribosomal_uL14"/>
</dbReference>
<dbReference type="InterPro" id="IPR019971">
    <property type="entry name" value="Ribosomal_uL14_arc"/>
</dbReference>
<dbReference type="InterPro" id="IPR036853">
    <property type="entry name" value="Ribosomal_uL14_sf"/>
</dbReference>
<dbReference type="NCBIfam" id="NF006344">
    <property type="entry name" value="PRK08571.1"/>
    <property type="match status" value="1"/>
</dbReference>
<dbReference type="NCBIfam" id="TIGR03673">
    <property type="entry name" value="uL14_arch"/>
    <property type="match status" value="1"/>
</dbReference>
<dbReference type="PANTHER" id="PTHR11761">
    <property type="entry name" value="50S/60S RIBOSOMAL PROTEIN L14/L23"/>
    <property type="match status" value="1"/>
</dbReference>
<dbReference type="PANTHER" id="PTHR11761:SF8">
    <property type="entry name" value="LARGE RIBOSOMAL SUBUNIT PROTEIN UL14"/>
    <property type="match status" value="1"/>
</dbReference>
<dbReference type="Pfam" id="PF00238">
    <property type="entry name" value="Ribosomal_L14"/>
    <property type="match status" value="1"/>
</dbReference>
<dbReference type="SMART" id="SM01374">
    <property type="entry name" value="Ribosomal_L14"/>
    <property type="match status" value="1"/>
</dbReference>
<dbReference type="SUPFAM" id="SSF50193">
    <property type="entry name" value="Ribosomal protein L14"/>
    <property type="match status" value="1"/>
</dbReference>
<accession>A2SPL2</accession>
<feature type="chain" id="PRO_1000055629" description="Large ribosomal subunit protein uL14">
    <location>
        <begin position="1"/>
        <end position="132"/>
    </location>
</feature>
<gene>
    <name evidence="1" type="primary">rpl14</name>
    <name type="ordered locus">Mlab_0091</name>
</gene>
<comment type="function">
    <text evidence="1">Binds to 23S rRNA. Forms part of two intersubunit bridges in the 70S ribosome.</text>
</comment>
<comment type="subunit">
    <text evidence="1">Part of the 50S ribosomal subunit. Forms a cluster with proteins L3 and L24e, part of which may contact the 16S rRNA in 2 intersubunit bridges.</text>
</comment>
<comment type="similarity">
    <text evidence="1">Belongs to the universal ribosomal protein uL14 family.</text>
</comment>
<evidence type="ECO:0000255" key="1">
    <source>
        <dbReference type="HAMAP-Rule" id="MF_01367"/>
    </source>
</evidence>
<evidence type="ECO:0000305" key="2"/>
<proteinExistence type="inferred from homology"/>
<keyword id="KW-1185">Reference proteome</keyword>
<keyword id="KW-0687">Ribonucleoprotein</keyword>
<keyword id="KW-0689">Ribosomal protein</keyword>
<keyword id="KW-0694">RNA-binding</keyword>
<keyword id="KW-0699">rRNA-binding</keyword>
<protein>
    <recommendedName>
        <fullName evidence="1">Large ribosomal subunit protein uL14</fullName>
    </recommendedName>
    <alternativeName>
        <fullName evidence="2">50S ribosomal protein L14</fullName>
    </alternativeName>
</protein>